<proteinExistence type="inferred from homology"/>
<dbReference type="EMBL" id="CP000075">
    <property type="protein sequence ID" value="AAY35895.1"/>
    <property type="molecule type" value="Genomic_DNA"/>
</dbReference>
<dbReference type="RefSeq" id="WP_003406665.1">
    <property type="nucleotide sequence ID" value="NC_007005.1"/>
</dbReference>
<dbReference type="RefSeq" id="YP_233933.1">
    <property type="nucleotide sequence ID" value="NC_007005.1"/>
</dbReference>
<dbReference type="SMR" id="Q4ZY77"/>
<dbReference type="STRING" id="205918.Psyr_0837"/>
<dbReference type="KEGG" id="psb:Psyr_0837"/>
<dbReference type="PATRIC" id="fig|205918.7.peg.864"/>
<dbReference type="eggNOG" id="COG1489">
    <property type="taxonomic scope" value="Bacteria"/>
</dbReference>
<dbReference type="HOGENOM" id="CLU_052299_2_0_6"/>
<dbReference type="OrthoDB" id="9802365at2"/>
<dbReference type="Proteomes" id="UP000000426">
    <property type="component" value="Chromosome"/>
</dbReference>
<dbReference type="GO" id="GO:0003677">
    <property type="term" value="F:DNA binding"/>
    <property type="evidence" value="ECO:0007669"/>
    <property type="project" value="InterPro"/>
</dbReference>
<dbReference type="CDD" id="cd22359">
    <property type="entry name" value="SfsA-like_bacterial"/>
    <property type="match status" value="1"/>
</dbReference>
<dbReference type="FunFam" id="2.40.50.580:FF:000001">
    <property type="entry name" value="Sugar fermentation stimulation protein A"/>
    <property type="match status" value="1"/>
</dbReference>
<dbReference type="Gene3D" id="2.40.50.580">
    <property type="match status" value="1"/>
</dbReference>
<dbReference type="Gene3D" id="3.40.1350.60">
    <property type="match status" value="1"/>
</dbReference>
<dbReference type="HAMAP" id="MF_00095">
    <property type="entry name" value="SfsA"/>
    <property type="match status" value="1"/>
</dbReference>
<dbReference type="InterPro" id="IPR005224">
    <property type="entry name" value="SfsA"/>
</dbReference>
<dbReference type="InterPro" id="IPR040452">
    <property type="entry name" value="SfsA_C"/>
</dbReference>
<dbReference type="InterPro" id="IPR041465">
    <property type="entry name" value="SfsA_N"/>
</dbReference>
<dbReference type="NCBIfam" id="TIGR00230">
    <property type="entry name" value="sfsA"/>
    <property type="match status" value="1"/>
</dbReference>
<dbReference type="PANTHER" id="PTHR30545">
    <property type="entry name" value="SUGAR FERMENTATION STIMULATION PROTEIN A"/>
    <property type="match status" value="1"/>
</dbReference>
<dbReference type="PANTHER" id="PTHR30545:SF2">
    <property type="entry name" value="SUGAR FERMENTATION STIMULATION PROTEIN A"/>
    <property type="match status" value="1"/>
</dbReference>
<dbReference type="Pfam" id="PF03749">
    <property type="entry name" value="SfsA"/>
    <property type="match status" value="1"/>
</dbReference>
<dbReference type="Pfam" id="PF17746">
    <property type="entry name" value="SfsA_N"/>
    <property type="match status" value="1"/>
</dbReference>
<organism>
    <name type="scientific">Pseudomonas syringae pv. syringae (strain B728a)</name>
    <dbReference type="NCBI Taxonomy" id="205918"/>
    <lineage>
        <taxon>Bacteria</taxon>
        <taxon>Pseudomonadati</taxon>
        <taxon>Pseudomonadota</taxon>
        <taxon>Gammaproteobacteria</taxon>
        <taxon>Pseudomonadales</taxon>
        <taxon>Pseudomonadaceae</taxon>
        <taxon>Pseudomonas</taxon>
        <taxon>Pseudomonas syringae</taxon>
    </lineage>
</organism>
<reference key="1">
    <citation type="journal article" date="2005" name="Proc. Natl. Acad. Sci. U.S.A.">
        <title>Comparison of the complete genome sequences of Pseudomonas syringae pv. syringae B728a and pv. tomato DC3000.</title>
        <authorList>
            <person name="Feil H."/>
            <person name="Feil W.S."/>
            <person name="Chain P."/>
            <person name="Larimer F."/>
            <person name="Dibartolo G."/>
            <person name="Copeland A."/>
            <person name="Lykidis A."/>
            <person name="Trong S."/>
            <person name="Nolan M."/>
            <person name="Goltsman E."/>
            <person name="Thiel J."/>
            <person name="Malfatti S."/>
            <person name="Loper J.E."/>
            <person name="Lapidus A."/>
            <person name="Detter J.C."/>
            <person name="Land M."/>
            <person name="Richardson P.M."/>
            <person name="Kyrpides N.C."/>
            <person name="Ivanova N."/>
            <person name="Lindow S.E."/>
        </authorList>
    </citation>
    <scope>NUCLEOTIDE SEQUENCE [LARGE SCALE GENOMIC DNA]</scope>
    <source>
        <strain>B728a</strain>
    </source>
</reference>
<protein>
    <recommendedName>
        <fullName evidence="1">Sugar fermentation stimulation protein homolog</fullName>
    </recommendedName>
</protein>
<sequence length="237" mass="26248">MRFSPQLEQGRLLVRYKRFLADIETDSGELLTIHCPNTGSMLNCMMPGGRVWFSRSNDPKRKLPGTWEISETPQGRLACINTGRANTLVEEALRAGVISELTGFTALKREVAYGQEKSRVDFRLEYPDGYLYLEVKSVTLGFDGSSVAAFPDAVTQRGARHLRELATLAREGVRAVLLYCVNLTGIDAVRPAQEIDPAYAAALREAIDAGVQILAYGAQLTSEEIFIDRRLQVHGLD</sequence>
<evidence type="ECO:0000255" key="1">
    <source>
        <dbReference type="HAMAP-Rule" id="MF_00095"/>
    </source>
</evidence>
<name>SFSA_PSEU2</name>
<accession>Q4ZY77</accession>
<comment type="similarity">
    <text evidence="1">Belongs to the SfsA family.</text>
</comment>
<gene>
    <name evidence="1" type="primary">sfsA</name>
    <name type="ordered locus">Psyr_0837</name>
</gene>
<feature type="chain" id="PRO_1000008016" description="Sugar fermentation stimulation protein homolog">
    <location>
        <begin position="1"/>
        <end position="237"/>
    </location>
</feature>